<proteinExistence type="inferred from homology"/>
<feature type="chain" id="PRO_1000192632" description="Ribosomal protein L11 methyltransferase">
    <location>
        <begin position="1"/>
        <end position="294"/>
    </location>
</feature>
<feature type="binding site" evidence="1">
    <location>
        <position position="145"/>
    </location>
    <ligand>
        <name>S-adenosyl-L-methionine</name>
        <dbReference type="ChEBI" id="CHEBI:59789"/>
    </ligand>
</feature>
<feature type="binding site" evidence="1">
    <location>
        <position position="166"/>
    </location>
    <ligand>
        <name>S-adenosyl-L-methionine</name>
        <dbReference type="ChEBI" id="CHEBI:59789"/>
    </ligand>
</feature>
<feature type="binding site" evidence="1">
    <location>
        <position position="188"/>
    </location>
    <ligand>
        <name>S-adenosyl-L-methionine</name>
        <dbReference type="ChEBI" id="CHEBI:59789"/>
    </ligand>
</feature>
<feature type="binding site" evidence="1">
    <location>
        <position position="230"/>
    </location>
    <ligand>
        <name>S-adenosyl-L-methionine</name>
        <dbReference type="ChEBI" id="CHEBI:59789"/>
    </ligand>
</feature>
<name>PRMA_GLAP5</name>
<sequence>MAWVQIRLNSTDREAEKISDFLEDIGAVSVTFMNSQDTPIFEPLPGETRLWGNTDVVALFDAETDMKEIVSTLVKSKLVATDFPYKIEQIEDKDWEREWMDNFHPMQFGKRLWICPSWREIPDPNAVNVMLDPGLAFGTGTHPTTALCLTWLDSLDLTDKTVIDFGCGSGILAIAALKLGAKKAIGIDIDPQAILASQNNAEVNGVADRLQLFLTKDQPQNLIADVVIANILAGPLKELAPQIITLVKPQGNLGLSGILATQAESVCKAYQNSFKLDSIIEKEEWCRITGIKKH</sequence>
<evidence type="ECO:0000255" key="1">
    <source>
        <dbReference type="HAMAP-Rule" id="MF_00735"/>
    </source>
</evidence>
<dbReference type="EC" id="2.1.1.-" evidence="1"/>
<dbReference type="EMBL" id="CP001321">
    <property type="protein sequence ID" value="ACL33038.1"/>
    <property type="molecule type" value="Genomic_DNA"/>
</dbReference>
<dbReference type="RefSeq" id="WP_015939792.1">
    <property type="nucleotide sequence ID" value="NC_011852.1"/>
</dbReference>
<dbReference type="SMR" id="B8F6T6"/>
<dbReference type="STRING" id="557723.HAPS_1475"/>
<dbReference type="KEGG" id="hap:HAPS_1475"/>
<dbReference type="PATRIC" id="fig|557723.8.peg.1445"/>
<dbReference type="HOGENOM" id="CLU_049382_4_1_6"/>
<dbReference type="Proteomes" id="UP000006743">
    <property type="component" value="Chromosome"/>
</dbReference>
<dbReference type="GO" id="GO:0005829">
    <property type="term" value="C:cytosol"/>
    <property type="evidence" value="ECO:0007669"/>
    <property type="project" value="TreeGrafter"/>
</dbReference>
<dbReference type="GO" id="GO:0016279">
    <property type="term" value="F:protein-lysine N-methyltransferase activity"/>
    <property type="evidence" value="ECO:0007669"/>
    <property type="project" value="TreeGrafter"/>
</dbReference>
<dbReference type="GO" id="GO:0032259">
    <property type="term" value="P:methylation"/>
    <property type="evidence" value="ECO:0007669"/>
    <property type="project" value="UniProtKB-KW"/>
</dbReference>
<dbReference type="CDD" id="cd02440">
    <property type="entry name" value="AdoMet_MTases"/>
    <property type="match status" value="1"/>
</dbReference>
<dbReference type="Gene3D" id="3.40.50.150">
    <property type="entry name" value="Vaccinia Virus protein VP39"/>
    <property type="match status" value="1"/>
</dbReference>
<dbReference type="HAMAP" id="MF_00735">
    <property type="entry name" value="Methyltr_PrmA"/>
    <property type="match status" value="1"/>
</dbReference>
<dbReference type="InterPro" id="IPR050078">
    <property type="entry name" value="Ribosomal_L11_MeTrfase_PrmA"/>
</dbReference>
<dbReference type="InterPro" id="IPR004498">
    <property type="entry name" value="Ribosomal_PrmA_MeTrfase"/>
</dbReference>
<dbReference type="InterPro" id="IPR029063">
    <property type="entry name" value="SAM-dependent_MTases_sf"/>
</dbReference>
<dbReference type="NCBIfam" id="TIGR00406">
    <property type="entry name" value="prmA"/>
    <property type="match status" value="1"/>
</dbReference>
<dbReference type="PANTHER" id="PTHR43648">
    <property type="entry name" value="ELECTRON TRANSFER FLAVOPROTEIN BETA SUBUNIT LYSINE METHYLTRANSFERASE"/>
    <property type="match status" value="1"/>
</dbReference>
<dbReference type="PANTHER" id="PTHR43648:SF1">
    <property type="entry name" value="ELECTRON TRANSFER FLAVOPROTEIN BETA SUBUNIT LYSINE METHYLTRANSFERASE"/>
    <property type="match status" value="1"/>
</dbReference>
<dbReference type="Pfam" id="PF06325">
    <property type="entry name" value="PrmA"/>
    <property type="match status" value="1"/>
</dbReference>
<dbReference type="PIRSF" id="PIRSF000401">
    <property type="entry name" value="RPL11_MTase"/>
    <property type="match status" value="1"/>
</dbReference>
<dbReference type="SUPFAM" id="SSF53335">
    <property type="entry name" value="S-adenosyl-L-methionine-dependent methyltransferases"/>
    <property type="match status" value="1"/>
</dbReference>
<comment type="function">
    <text evidence="1">Methylates ribosomal protein L11.</text>
</comment>
<comment type="catalytic activity">
    <reaction evidence="1">
        <text>L-lysyl-[protein] + 3 S-adenosyl-L-methionine = N(6),N(6),N(6)-trimethyl-L-lysyl-[protein] + 3 S-adenosyl-L-homocysteine + 3 H(+)</text>
        <dbReference type="Rhea" id="RHEA:54192"/>
        <dbReference type="Rhea" id="RHEA-COMP:9752"/>
        <dbReference type="Rhea" id="RHEA-COMP:13826"/>
        <dbReference type="ChEBI" id="CHEBI:15378"/>
        <dbReference type="ChEBI" id="CHEBI:29969"/>
        <dbReference type="ChEBI" id="CHEBI:57856"/>
        <dbReference type="ChEBI" id="CHEBI:59789"/>
        <dbReference type="ChEBI" id="CHEBI:61961"/>
    </reaction>
</comment>
<comment type="subcellular location">
    <subcellularLocation>
        <location evidence="1">Cytoplasm</location>
    </subcellularLocation>
</comment>
<comment type="similarity">
    <text evidence="1">Belongs to the methyltransferase superfamily. PrmA family.</text>
</comment>
<protein>
    <recommendedName>
        <fullName evidence="1">Ribosomal protein L11 methyltransferase</fullName>
        <shortName evidence="1">L11 Mtase</shortName>
        <ecNumber evidence="1">2.1.1.-</ecNumber>
    </recommendedName>
</protein>
<organism>
    <name type="scientific">Glaesserella parasuis serovar 5 (strain SH0165)</name>
    <name type="common">Haemophilus parasuis</name>
    <dbReference type="NCBI Taxonomy" id="557723"/>
    <lineage>
        <taxon>Bacteria</taxon>
        <taxon>Pseudomonadati</taxon>
        <taxon>Pseudomonadota</taxon>
        <taxon>Gammaproteobacteria</taxon>
        <taxon>Pasteurellales</taxon>
        <taxon>Pasteurellaceae</taxon>
        <taxon>Glaesserella</taxon>
    </lineage>
</organism>
<reference key="1">
    <citation type="journal article" date="2009" name="J. Bacteriol.">
        <title>Complete genome sequence of Haemophilus parasuis SH0165.</title>
        <authorList>
            <person name="Yue M."/>
            <person name="Yang F."/>
            <person name="Yang J."/>
            <person name="Bei W."/>
            <person name="Cai X."/>
            <person name="Chen L."/>
            <person name="Dong J."/>
            <person name="Zhou R."/>
            <person name="Jin M."/>
            <person name="Jin Q."/>
            <person name="Chen H."/>
        </authorList>
    </citation>
    <scope>NUCLEOTIDE SEQUENCE [LARGE SCALE GENOMIC DNA]</scope>
    <source>
        <strain>SH0165</strain>
    </source>
</reference>
<gene>
    <name evidence="1" type="primary">prmA</name>
    <name type="ordered locus">HAPS_1475</name>
</gene>
<accession>B8F6T6</accession>
<keyword id="KW-0963">Cytoplasm</keyword>
<keyword id="KW-0489">Methyltransferase</keyword>
<keyword id="KW-1185">Reference proteome</keyword>
<keyword id="KW-0949">S-adenosyl-L-methionine</keyword>
<keyword id="KW-0808">Transferase</keyword>